<keyword id="KW-0131">Cell cycle</keyword>
<keyword id="KW-0132">Cell division</keyword>
<keyword id="KW-0997">Cell inner membrane</keyword>
<keyword id="KW-1003">Cell membrane</keyword>
<keyword id="KW-0133">Cell shape</keyword>
<keyword id="KW-0961">Cell wall biogenesis/degradation</keyword>
<keyword id="KW-0460">Magnesium</keyword>
<keyword id="KW-0472">Membrane</keyword>
<keyword id="KW-0479">Metal-binding</keyword>
<keyword id="KW-0573">Peptidoglycan synthesis</keyword>
<keyword id="KW-0808">Transferase</keyword>
<keyword id="KW-0812">Transmembrane</keyword>
<keyword id="KW-1133">Transmembrane helix</keyword>
<comment type="function">
    <text evidence="1">Catalyzes the initial step of the lipid cycle reactions in the biosynthesis of the cell wall peptidoglycan: transfers peptidoglycan precursor phospho-MurNAc-pentapeptide from UDP-MurNAc-pentapeptide onto the lipid carrier undecaprenyl phosphate, yielding undecaprenyl-pyrophosphoryl-MurNAc-pentapeptide, known as lipid I.</text>
</comment>
<comment type="catalytic activity">
    <reaction evidence="1">
        <text>UDP-N-acetyl-alpha-D-muramoyl-L-alanyl-gamma-D-glutamyl-meso-2,6-diaminopimeloyl-D-alanyl-D-alanine + di-trans,octa-cis-undecaprenyl phosphate = di-trans,octa-cis-undecaprenyl diphospho-N-acetyl-alpha-D-muramoyl-L-alanyl-D-glutamyl-meso-2,6-diaminopimeloyl-D-alanyl-D-alanine + UMP</text>
        <dbReference type="Rhea" id="RHEA:28386"/>
        <dbReference type="ChEBI" id="CHEBI:57865"/>
        <dbReference type="ChEBI" id="CHEBI:60392"/>
        <dbReference type="ChEBI" id="CHEBI:61386"/>
        <dbReference type="ChEBI" id="CHEBI:61387"/>
        <dbReference type="EC" id="2.7.8.13"/>
    </reaction>
</comment>
<comment type="cofactor">
    <cofactor evidence="1">
        <name>Mg(2+)</name>
        <dbReference type="ChEBI" id="CHEBI:18420"/>
    </cofactor>
</comment>
<comment type="pathway">
    <text evidence="1">Cell wall biogenesis; peptidoglycan biosynthesis.</text>
</comment>
<comment type="subcellular location">
    <subcellularLocation>
        <location evidence="1">Cell inner membrane</location>
        <topology evidence="1">Multi-pass membrane protein</topology>
    </subcellularLocation>
</comment>
<comment type="similarity">
    <text evidence="1">Belongs to the glycosyltransferase 4 family. MraY subfamily.</text>
</comment>
<organism>
    <name type="scientific">Cereibacter sphaeroides (strain ATCC 17029 / ATH 2.4.9)</name>
    <name type="common">Rhodobacter sphaeroides</name>
    <dbReference type="NCBI Taxonomy" id="349101"/>
    <lineage>
        <taxon>Bacteria</taxon>
        <taxon>Pseudomonadati</taxon>
        <taxon>Pseudomonadota</taxon>
        <taxon>Alphaproteobacteria</taxon>
        <taxon>Rhodobacterales</taxon>
        <taxon>Paracoccaceae</taxon>
        <taxon>Cereibacter</taxon>
    </lineage>
</organism>
<accession>A3PHS2</accession>
<protein>
    <recommendedName>
        <fullName evidence="1">Phospho-N-acetylmuramoyl-pentapeptide-transferase</fullName>
        <ecNumber evidence="1">2.7.8.13</ecNumber>
    </recommendedName>
    <alternativeName>
        <fullName evidence="1">UDP-MurNAc-pentapeptide phosphotransferase</fullName>
    </alternativeName>
</protein>
<reference key="1">
    <citation type="submission" date="2007-02" db="EMBL/GenBank/DDBJ databases">
        <title>Complete sequence of chromosome 1 of Rhodobacter sphaeroides ATCC 17029.</title>
        <authorList>
            <person name="Copeland A."/>
            <person name="Lucas S."/>
            <person name="Lapidus A."/>
            <person name="Barry K."/>
            <person name="Detter J.C."/>
            <person name="Glavina del Rio T."/>
            <person name="Hammon N."/>
            <person name="Israni S."/>
            <person name="Dalin E."/>
            <person name="Tice H."/>
            <person name="Pitluck S."/>
            <person name="Kiss H."/>
            <person name="Brettin T."/>
            <person name="Bruce D."/>
            <person name="Han C."/>
            <person name="Tapia R."/>
            <person name="Gilna P."/>
            <person name="Schmutz J."/>
            <person name="Larimer F."/>
            <person name="Land M."/>
            <person name="Hauser L."/>
            <person name="Kyrpides N."/>
            <person name="Mikhailova N."/>
            <person name="Richardson P."/>
            <person name="Mackenzie C."/>
            <person name="Choudhary M."/>
            <person name="Donohue T.J."/>
            <person name="Kaplan S."/>
        </authorList>
    </citation>
    <scope>NUCLEOTIDE SEQUENCE [LARGE SCALE GENOMIC DNA]</scope>
    <source>
        <strain>ATCC 17029 / ATH 2.4.9</strain>
    </source>
</reference>
<sequence length="360" mass="38797">MLYLLTAFSDGGDIFNLFRYLTFRAGAAFFTALIFGFLFGRPLIDFLRRKQGKGQPIRDDGPTTHFAKAGTPTMGGLLILSALVVSTLLWARLDNPYVWIVLLVTVAFGLIGFADDYAKVKKQNTKGVPGRVRFLIGLLIAALAAIAAAWSHPPDLTLQLAMPFFKDALINLGWFFVPFAMVVIVGAANAVNLTDGLDGLAIMPVMIAGTTLGVIAYVVGNFNLTDYLGVHFVPGTGELLIFSSALVGGGLGFLWYNAPPAAVFMGDTGSLALGGALGAIAVCTKHEIVLAIVGGLFVTEALSVIIQVLYFKRTGRRVFLMAPIHHHFEKKGWAEPQIVIRFWIISLILALIGLSTLKLR</sequence>
<name>MRAY_CERS1</name>
<evidence type="ECO:0000255" key="1">
    <source>
        <dbReference type="HAMAP-Rule" id="MF_00038"/>
    </source>
</evidence>
<feature type="chain" id="PRO_1000003044" description="Phospho-N-acetylmuramoyl-pentapeptide-transferase">
    <location>
        <begin position="1"/>
        <end position="360"/>
    </location>
</feature>
<feature type="transmembrane region" description="Helical" evidence="1">
    <location>
        <begin position="27"/>
        <end position="47"/>
    </location>
</feature>
<feature type="transmembrane region" description="Helical" evidence="1">
    <location>
        <begin position="71"/>
        <end position="91"/>
    </location>
</feature>
<feature type="transmembrane region" description="Helical" evidence="1">
    <location>
        <begin position="93"/>
        <end position="113"/>
    </location>
</feature>
<feature type="transmembrane region" description="Helical" evidence="1">
    <location>
        <begin position="134"/>
        <end position="154"/>
    </location>
</feature>
<feature type="transmembrane region" description="Helical" evidence="1">
    <location>
        <begin position="168"/>
        <end position="188"/>
    </location>
</feature>
<feature type="transmembrane region" description="Helical" evidence="1">
    <location>
        <begin position="199"/>
        <end position="219"/>
    </location>
</feature>
<feature type="transmembrane region" description="Helical" evidence="1">
    <location>
        <begin position="239"/>
        <end position="259"/>
    </location>
</feature>
<feature type="transmembrane region" description="Helical" evidence="1">
    <location>
        <begin position="262"/>
        <end position="282"/>
    </location>
</feature>
<feature type="transmembrane region" description="Helical" evidence="1">
    <location>
        <begin position="288"/>
        <end position="308"/>
    </location>
</feature>
<feature type="transmembrane region" description="Helical" evidence="1">
    <location>
        <begin position="337"/>
        <end position="357"/>
    </location>
</feature>
<gene>
    <name evidence="1" type="primary">mraY</name>
    <name type="ordered locus">Rsph17029_0777</name>
</gene>
<proteinExistence type="inferred from homology"/>
<dbReference type="EC" id="2.7.8.13" evidence="1"/>
<dbReference type="EMBL" id="CP000577">
    <property type="protein sequence ID" value="ABN75888.1"/>
    <property type="molecule type" value="Genomic_DNA"/>
</dbReference>
<dbReference type="RefSeq" id="WP_002719256.1">
    <property type="nucleotide sequence ID" value="NC_009049.1"/>
</dbReference>
<dbReference type="SMR" id="A3PHS2"/>
<dbReference type="GeneID" id="3719535"/>
<dbReference type="KEGG" id="rsh:Rsph17029_0777"/>
<dbReference type="HOGENOM" id="CLU_023982_0_0_5"/>
<dbReference type="UniPathway" id="UPA00219"/>
<dbReference type="GO" id="GO:0005886">
    <property type="term" value="C:plasma membrane"/>
    <property type="evidence" value="ECO:0007669"/>
    <property type="project" value="UniProtKB-SubCell"/>
</dbReference>
<dbReference type="GO" id="GO:0046872">
    <property type="term" value="F:metal ion binding"/>
    <property type="evidence" value="ECO:0007669"/>
    <property type="project" value="UniProtKB-KW"/>
</dbReference>
<dbReference type="GO" id="GO:0008963">
    <property type="term" value="F:phospho-N-acetylmuramoyl-pentapeptide-transferase activity"/>
    <property type="evidence" value="ECO:0007669"/>
    <property type="project" value="UniProtKB-UniRule"/>
</dbReference>
<dbReference type="GO" id="GO:0051992">
    <property type="term" value="F:UDP-N-acetylmuramoyl-L-alanyl-D-glutamyl-meso-2,6-diaminopimelyl-D-alanyl-D-alanine:undecaprenyl-phosphate transferase activity"/>
    <property type="evidence" value="ECO:0007669"/>
    <property type="project" value="RHEA"/>
</dbReference>
<dbReference type="GO" id="GO:0051301">
    <property type="term" value="P:cell division"/>
    <property type="evidence" value="ECO:0007669"/>
    <property type="project" value="UniProtKB-KW"/>
</dbReference>
<dbReference type="GO" id="GO:0071555">
    <property type="term" value="P:cell wall organization"/>
    <property type="evidence" value="ECO:0007669"/>
    <property type="project" value="UniProtKB-KW"/>
</dbReference>
<dbReference type="GO" id="GO:0009252">
    <property type="term" value="P:peptidoglycan biosynthetic process"/>
    <property type="evidence" value="ECO:0007669"/>
    <property type="project" value="UniProtKB-UniRule"/>
</dbReference>
<dbReference type="GO" id="GO:0008360">
    <property type="term" value="P:regulation of cell shape"/>
    <property type="evidence" value="ECO:0007669"/>
    <property type="project" value="UniProtKB-KW"/>
</dbReference>
<dbReference type="CDD" id="cd06852">
    <property type="entry name" value="GT_MraY"/>
    <property type="match status" value="1"/>
</dbReference>
<dbReference type="HAMAP" id="MF_00038">
    <property type="entry name" value="MraY"/>
    <property type="match status" value="1"/>
</dbReference>
<dbReference type="InterPro" id="IPR000715">
    <property type="entry name" value="Glycosyl_transferase_4"/>
</dbReference>
<dbReference type="InterPro" id="IPR003524">
    <property type="entry name" value="PNAcMuramoyl-5peptid_Trfase"/>
</dbReference>
<dbReference type="InterPro" id="IPR018480">
    <property type="entry name" value="PNAcMuramoyl-5peptid_Trfase_CS"/>
</dbReference>
<dbReference type="NCBIfam" id="TIGR00445">
    <property type="entry name" value="mraY"/>
    <property type="match status" value="1"/>
</dbReference>
<dbReference type="PANTHER" id="PTHR22926">
    <property type="entry name" value="PHOSPHO-N-ACETYLMURAMOYL-PENTAPEPTIDE-TRANSFERASE"/>
    <property type="match status" value="1"/>
</dbReference>
<dbReference type="PANTHER" id="PTHR22926:SF5">
    <property type="entry name" value="PHOSPHO-N-ACETYLMURAMOYL-PENTAPEPTIDE-TRANSFERASE HOMOLOG"/>
    <property type="match status" value="1"/>
</dbReference>
<dbReference type="Pfam" id="PF00953">
    <property type="entry name" value="Glycos_transf_4"/>
    <property type="match status" value="1"/>
</dbReference>
<dbReference type="Pfam" id="PF10555">
    <property type="entry name" value="MraY_sig1"/>
    <property type="match status" value="1"/>
</dbReference>
<dbReference type="PROSITE" id="PS01347">
    <property type="entry name" value="MRAY_1"/>
    <property type="match status" value="1"/>
</dbReference>
<dbReference type="PROSITE" id="PS01348">
    <property type="entry name" value="MRAY_2"/>
    <property type="match status" value="1"/>
</dbReference>